<gene>
    <name evidence="6" type="primary">ENV10</name>
    <name evidence="7" type="synonym">SND2</name>
    <name evidence="10" type="ordered locus">YLR065C</name>
    <name type="ORF">L2180</name>
</gene>
<reference key="1">
    <citation type="journal article" date="1997" name="Nature">
        <title>The nucleotide sequence of Saccharomyces cerevisiae chromosome XII.</title>
        <authorList>
            <person name="Johnston M."/>
            <person name="Hillier L.W."/>
            <person name="Riles L."/>
            <person name="Albermann K."/>
            <person name="Andre B."/>
            <person name="Ansorge W."/>
            <person name="Benes V."/>
            <person name="Brueckner M."/>
            <person name="Delius H."/>
            <person name="Dubois E."/>
            <person name="Duesterhoeft A."/>
            <person name="Entian K.-D."/>
            <person name="Floeth M."/>
            <person name="Goffeau A."/>
            <person name="Hebling U."/>
            <person name="Heumann K."/>
            <person name="Heuss-Neitzel D."/>
            <person name="Hilbert H."/>
            <person name="Hilger F."/>
            <person name="Kleine K."/>
            <person name="Koetter P."/>
            <person name="Louis E.J."/>
            <person name="Messenguy F."/>
            <person name="Mewes H.-W."/>
            <person name="Miosga T."/>
            <person name="Moestl D."/>
            <person name="Mueller-Auer S."/>
            <person name="Nentwich U."/>
            <person name="Obermaier B."/>
            <person name="Piravandi E."/>
            <person name="Pohl T.M."/>
            <person name="Portetelle D."/>
            <person name="Purnelle B."/>
            <person name="Rechmann S."/>
            <person name="Rieger M."/>
            <person name="Rinke M."/>
            <person name="Rose M."/>
            <person name="Scharfe M."/>
            <person name="Scherens B."/>
            <person name="Scholler P."/>
            <person name="Schwager C."/>
            <person name="Schwarz S."/>
            <person name="Underwood A.P."/>
            <person name="Urrestarazu L.A."/>
            <person name="Vandenbol M."/>
            <person name="Verhasselt P."/>
            <person name="Vierendeels F."/>
            <person name="Voet M."/>
            <person name="Volckaert G."/>
            <person name="Voss H."/>
            <person name="Wambutt R."/>
            <person name="Wedler E."/>
            <person name="Wedler H."/>
            <person name="Zimmermann F.K."/>
            <person name="Zollner A."/>
            <person name="Hani J."/>
            <person name="Hoheisel J.D."/>
        </authorList>
    </citation>
    <scope>NUCLEOTIDE SEQUENCE [LARGE SCALE GENOMIC DNA]</scope>
    <source>
        <strain>ATCC 204508 / S288c</strain>
    </source>
</reference>
<reference key="2">
    <citation type="journal article" date="2014" name="G3 (Bethesda)">
        <title>The reference genome sequence of Saccharomyces cerevisiae: Then and now.</title>
        <authorList>
            <person name="Engel S.R."/>
            <person name="Dietrich F.S."/>
            <person name="Fisk D.G."/>
            <person name="Binkley G."/>
            <person name="Balakrishnan R."/>
            <person name="Costanzo M.C."/>
            <person name="Dwight S.S."/>
            <person name="Hitz B.C."/>
            <person name="Karra K."/>
            <person name="Nash R.S."/>
            <person name="Weng S."/>
            <person name="Wong E.D."/>
            <person name="Lloyd P."/>
            <person name="Skrzypek M.S."/>
            <person name="Miyasato S.R."/>
            <person name="Simison M."/>
            <person name="Cherry J.M."/>
        </authorList>
    </citation>
    <scope>GENOME REANNOTATION</scope>
    <source>
        <strain>ATCC 204508 / S288c</strain>
    </source>
</reference>
<reference key="3">
    <citation type="journal article" date="2007" name="Genome Res.">
        <title>Approaching a complete repository of sequence-verified protein-encoding clones for Saccharomyces cerevisiae.</title>
        <authorList>
            <person name="Hu Y."/>
            <person name="Rolfs A."/>
            <person name="Bhullar B."/>
            <person name="Murthy T.V.S."/>
            <person name="Zhu C."/>
            <person name="Berger M.F."/>
            <person name="Camargo A.A."/>
            <person name="Kelley F."/>
            <person name="McCarron S."/>
            <person name="Jepson D."/>
            <person name="Richardson A."/>
            <person name="Raphael J."/>
            <person name="Moreira D."/>
            <person name="Taycher E."/>
            <person name="Zuo D."/>
            <person name="Mohr S."/>
            <person name="Kane M.F."/>
            <person name="Williamson J."/>
            <person name="Simpson A.J.G."/>
            <person name="Bulyk M.L."/>
            <person name="Harlow E."/>
            <person name="Marsischky G."/>
            <person name="Kolodner R.D."/>
            <person name="LaBaer J."/>
        </authorList>
    </citation>
    <scope>NUCLEOTIDE SEQUENCE [GENOMIC DNA]</scope>
    <source>
        <strain>ATCC 204508 / S288c</strain>
    </source>
</reference>
<reference key="4">
    <citation type="journal article" date="2006" name="Proc. Natl. Acad. Sci. U.S.A.">
        <title>A global topology map of the Saccharomyces cerevisiae membrane proteome.</title>
        <authorList>
            <person name="Kim H."/>
            <person name="Melen K."/>
            <person name="Oesterberg M."/>
            <person name="von Heijne G."/>
        </authorList>
    </citation>
    <scope>TOPOLOGY [LARGE SCALE ANALYSIS]</scope>
    <source>
        <strain>ATCC 208353 / W303-1A</strain>
    </source>
</reference>
<reference key="5">
    <citation type="journal article" date="2011" name="PLoS ONE">
        <title>A genome-wide immunodetection screen in S. cerevisiae uncovers novel genes involved in lysosomal vacuole function and morphology.</title>
        <authorList>
            <person name="Ricarte F."/>
            <person name="Menjivar R."/>
            <person name="Chhun S."/>
            <person name="Soreta T."/>
            <person name="Oliveira L."/>
            <person name="Hsueh T."/>
            <person name="Serranilla M."/>
            <person name="Gharakhanian E."/>
        </authorList>
    </citation>
    <scope>DISRUPTION PHENOTYPE</scope>
    <scope>FUNCTION</scope>
</reference>
<reference key="6">
    <citation type="journal article" date="2016" name="Nature">
        <title>The SND proteins constitute an alternative targeting route to the endoplasmic reticulum.</title>
        <authorList>
            <person name="Aviram N."/>
            <person name="Ast T."/>
            <person name="Costa E.A."/>
            <person name="Arakel E.C."/>
            <person name="Chuartzman S.G."/>
            <person name="Jan C.H."/>
            <person name="Hassdenteufel S."/>
            <person name="Dudek J."/>
            <person name="Jung M."/>
            <person name="Schorr S."/>
            <person name="Zimmermann R."/>
            <person name="Schwappach B."/>
            <person name="Weissman J.S."/>
            <person name="Schuldiner M."/>
        </authorList>
    </citation>
    <scope>FUNCTION</scope>
    <scope>SUBCELLULAR LOCATION</scope>
    <scope>INTERACTION WITH SND1; PHO88 AND SEC61</scope>
</reference>
<keyword id="KW-0256">Endoplasmic reticulum</keyword>
<keyword id="KW-0472">Membrane</keyword>
<keyword id="KW-0653">Protein transport</keyword>
<keyword id="KW-1185">Reference proteome</keyword>
<keyword id="KW-0812">Transmembrane</keyword>
<keyword id="KW-1133">Transmembrane helix</keyword>
<keyword id="KW-0813">Transport</keyword>
<evidence type="ECO:0000255" key="1"/>
<evidence type="ECO:0000256" key="2">
    <source>
        <dbReference type="SAM" id="MobiDB-lite"/>
    </source>
</evidence>
<evidence type="ECO:0000269" key="3">
    <source>
    </source>
</evidence>
<evidence type="ECO:0000269" key="4">
    <source>
    </source>
</evidence>
<evidence type="ECO:0000269" key="5">
    <source>
    </source>
</evidence>
<evidence type="ECO:0000303" key="6">
    <source>
    </source>
</evidence>
<evidence type="ECO:0000303" key="7">
    <source>
    </source>
</evidence>
<evidence type="ECO:0000305" key="8"/>
<evidence type="ECO:0000305" key="9">
    <source>
    </source>
</evidence>
<evidence type="ECO:0000312" key="10">
    <source>
        <dbReference type="SGD" id="S000004055"/>
    </source>
</evidence>
<proteinExistence type="evidence at protein level"/>
<comment type="function">
    <text evidence="4 5">Functions in the SND pathway, a SRP (signal recognition particle) and GET (guided entry of tail-anchored proteins) independent pathway for targeting a broad range of substrate proteins to the endoplasmic reticulum. SND functions in parallel to GET in targeting proteins with downstream hydrophobic motifs (PubMed:27905431). Involved in vacuolar processing and morphology (PubMed:21912603).</text>
</comment>
<comment type="subunit">
    <text evidence="5">Interacts with SND1, PHO88/SND3 and the translocon complex subunit SEC61. ENV10/SND2 and PHO88/SND3 form a complex with the translocon in the endoplasmic reticulum membrane.</text>
</comment>
<comment type="subcellular location">
    <subcellularLocation>
        <location evidence="5">Endoplasmic reticulum membrane</location>
        <topology evidence="1">Multi-pass membrane protein</topology>
    </subcellularLocation>
</comment>
<comment type="disruption phenotype">
    <text evidence="4">Exhibits cold sensitivity and leads to internal accumulation of precursor CPY.</text>
</comment>
<comment type="similarity">
    <text evidence="8">Belongs to the TMEM208 family.</text>
</comment>
<organism>
    <name type="scientific">Saccharomyces cerevisiae (strain ATCC 204508 / S288c)</name>
    <name type="common">Baker's yeast</name>
    <dbReference type="NCBI Taxonomy" id="559292"/>
    <lineage>
        <taxon>Eukaryota</taxon>
        <taxon>Fungi</taxon>
        <taxon>Dikarya</taxon>
        <taxon>Ascomycota</taxon>
        <taxon>Saccharomycotina</taxon>
        <taxon>Saccharomycetes</taxon>
        <taxon>Saccharomycetales</taxon>
        <taxon>Saccharomycetaceae</taxon>
        <taxon>Saccharomyces</taxon>
    </lineage>
</organism>
<feature type="chain" id="PRO_0000247246" description="SRP-independent targeting protein 2">
    <location>
        <begin position="1"/>
        <end position="181"/>
    </location>
</feature>
<feature type="topological domain" description="Cytoplasmic" evidence="9">
    <location>
        <begin position="1"/>
        <end position="15"/>
    </location>
</feature>
<feature type="transmembrane region" description="Helical" evidence="1">
    <location>
        <begin position="16"/>
        <end position="36"/>
    </location>
</feature>
<feature type="topological domain" description="Lumenal" evidence="9">
    <location>
        <begin position="37"/>
        <end position="45"/>
    </location>
</feature>
<feature type="transmembrane region" description="Helical" evidence="1">
    <location>
        <begin position="46"/>
        <end position="66"/>
    </location>
</feature>
<feature type="topological domain" description="Cytoplasmic" evidence="9">
    <location>
        <begin position="67"/>
        <end position="89"/>
    </location>
</feature>
<feature type="transmembrane region" description="Helical" evidence="1">
    <location>
        <begin position="90"/>
        <end position="110"/>
    </location>
</feature>
<feature type="topological domain" description="Lumenal" evidence="9">
    <location>
        <begin position="111"/>
        <end position="112"/>
    </location>
</feature>
<feature type="transmembrane region" description="Helical" evidence="1">
    <location>
        <begin position="113"/>
        <end position="133"/>
    </location>
</feature>
<feature type="topological domain" description="Cytoplasmic" evidence="3">
    <location>
        <begin position="134"/>
        <end position="181"/>
    </location>
</feature>
<feature type="region of interest" description="Disordered" evidence="2">
    <location>
        <begin position="144"/>
        <end position="181"/>
    </location>
</feature>
<feature type="compositionally biased region" description="Polar residues" evidence="2">
    <location>
        <begin position="144"/>
        <end position="157"/>
    </location>
</feature>
<feature type="compositionally biased region" description="Basic and acidic residues" evidence="2">
    <location>
        <begin position="168"/>
        <end position="181"/>
    </location>
</feature>
<dbReference type="EMBL" id="X94607">
    <property type="protein sequence ID" value="CAA64311.1"/>
    <property type="molecule type" value="Genomic_DNA"/>
</dbReference>
<dbReference type="EMBL" id="Z73237">
    <property type="protein sequence ID" value="CAA97621.1"/>
    <property type="molecule type" value="Genomic_DNA"/>
</dbReference>
<dbReference type="EMBL" id="AY558207">
    <property type="protein sequence ID" value="AAS56533.1"/>
    <property type="molecule type" value="Genomic_DNA"/>
</dbReference>
<dbReference type="EMBL" id="BK006945">
    <property type="protein sequence ID" value="DAA09382.1"/>
    <property type="molecule type" value="Genomic_DNA"/>
</dbReference>
<dbReference type="PIR" id="S61638">
    <property type="entry name" value="S61638"/>
</dbReference>
<dbReference type="RefSeq" id="NP_013166.1">
    <property type="nucleotide sequence ID" value="NM_001181952.1"/>
</dbReference>
<dbReference type="BioGRID" id="31339">
    <property type="interactions" value="517"/>
</dbReference>
<dbReference type="DIP" id="DIP-1937N"/>
<dbReference type="FunCoup" id="Q99382">
    <property type="interactions" value="174"/>
</dbReference>
<dbReference type="IntAct" id="Q99382">
    <property type="interactions" value="2"/>
</dbReference>
<dbReference type="MINT" id="Q99382"/>
<dbReference type="STRING" id="4932.YLR065C"/>
<dbReference type="TCDB" id="9.A.64.1.1">
    <property type="family name" value="the srp-independent targeting (snd) family"/>
</dbReference>
<dbReference type="PaxDb" id="4932-YLR065C"/>
<dbReference type="PeptideAtlas" id="Q99382"/>
<dbReference type="TopDownProteomics" id="Q99382"/>
<dbReference type="EnsemblFungi" id="YLR065C_mRNA">
    <property type="protein sequence ID" value="YLR065C"/>
    <property type="gene ID" value="YLR065C"/>
</dbReference>
<dbReference type="GeneID" id="850754"/>
<dbReference type="KEGG" id="sce:YLR065C"/>
<dbReference type="AGR" id="SGD:S000004055"/>
<dbReference type="SGD" id="S000004055">
    <property type="gene designation" value="ENV10"/>
</dbReference>
<dbReference type="VEuPathDB" id="FungiDB:YLR065C"/>
<dbReference type="eggNOG" id="KOG3269">
    <property type="taxonomic scope" value="Eukaryota"/>
</dbReference>
<dbReference type="GeneTree" id="ENSGT00390000008139"/>
<dbReference type="HOGENOM" id="CLU_094308_1_1_1"/>
<dbReference type="InParanoid" id="Q99382"/>
<dbReference type="OMA" id="GLKNQFF"/>
<dbReference type="OrthoDB" id="10012212at2759"/>
<dbReference type="BioCyc" id="YEAST:G3O-32218-MONOMER"/>
<dbReference type="BioGRID-ORCS" id="850754">
    <property type="hits" value="9 hits in 10 CRISPR screens"/>
</dbReference>
<dbReference type="PRO" id="PR:Q99382"/>
<dbReference type="Proteomes" id="UP000002311">
    <property type="component" value="Chromosome XII"/>
</dbReference>
<dbReference type="RNAct" id="Q99382">
    <property type="molecule type" value="protein"/>
</dbReference>
<dbReference type="GO" id="GO:0005783">
    <property type="term" value="C:endoplasmic reticulum"/>
    <property type="evidence" value="ECO:0007005"/>
    <property type="project" value="SGD"/>
</dbReference>
<dbReference type="GO" id="GO:0005789">
    <property type="term" value="C:endoplasmic reticulum membrane"/>
    <property type="evidence" value="ECO:0007669"/>
    <property type="project" value="UniProtKB-SubCell"/>
</dbReference>
<dbReference type="GO" id="GO:0043231">
    <property type="term" value="C:intracellular membrane-bounded organelle"/>
    <property type="evidence" value="ECO:0000318"/>
    <property type="project" value="GO_Central"/>
</dbReference>
<dbReference type="GO" id="GO:0005773">
    <property type="term" value="C:vacuole"/>
    <property type="evidence" value="ECO:0007669"/>
    <property type="project" value="GOC"/>
</dbReference>
<dbReference type="GO" id="GO:0015031">
    <property type="term" value="P:protein transport"/>
    <property type="evidence" value="ECO:0007669"/>
    <property type="project" value="UniProtKB-KW"/>
</dbReference>
<dbReference type="GO" id="GO:0006624">
    <property type="term" value="P:vacuolar protein processing"/>
    <property type="evidence" value="ECO:0000315"/>
    <property type="project" value="SGD"/>
</dbReference>
<dbReference type="InterPro" id="IPR008506">
    <property type="entry name" value="SND2/TMEM208"/>
</dbReference>
<dbReference type="PANTHER" id="PTHR13505">
    <property type="entry name" value="TRANSMEMBRANE PROTEIN 208"/>
    <property type="match status" value="1"/>
</dbReference>
<dbReference type="PANTHER" id="PTHR13505:SF7">
    <property type="entry name" value="TRANSMEMBRANE PROTEIN 208"/>
    <property type="match status" value="1"/>
</dbReference>
<dbReference type="Pfam" id="PF05620">
    <property type="entry name" value="TMEM208_SND2"/>
    <property type="match status" value="1"/>
</dbReference>
<protein>
    <recommendedName>
        <fullName evidence="7">SRP-independent targeting protein 2</fullName>
    </recommendedName>
    <alternativeName>
        <fullName evidence="6">Late endosome and vacuole interface protein 10</fullName>
    </alternativeName>
</protein>
<accession>Q99382</accession>
<accession>D6VY66</accession>
<accession>Q6Q5C1</accession>
<name>ENV10_YEAST</name>
<sequence>MAGKAGRKQASSNAKIIQGLYKQVSLFLGMAIVRLFISRKVTIGQWIKLVALNVPMFVALYIIVLSGKPKYDGNRVVKQGIDLNDNTNLISYFFDLIYLSLFGNIGIIAFRTFKFWWCLLLCPIYAGYKLYGLKNMFMPGAQQTQADNRSKNANEGQSKSKRQMKRERRGETDSKIKYKYR</sequence>